<sequence length="314" mass="33742">MGCRCCKIIQSYLFDPVQVPSPGYVNEVNSCKLDEDDTDKLKGKWSSEVLVQKNDPQRQGSKKTESSSRTADPWEPCWPHQGPLPQGDAGGEHHACGVNGIGPAATPQPTGNSSPTQDDRGSWASTANTVPPTQPFLEGGGTRKQDCVLLASEGTQVMRNGDSRAPSEAESFALEVQDHVFQIPAPDYLQHWGPAGDNVDHNEKDCVFKNHTEDESLEGIQPPVGEHGLNTPFSVRRSWDSLNEDVETEVLSICFNEKGPVHAMPVVDSGNRQEDTHGSDGDGDGEIVDEDAAVAEALAALEAATAGEDLDETD</sequence>
<accession>Q8IY42</accession>
<accession>Q9NV03</accession>
<evidence type="ECO:0000250" key="1">
    <source>
        <dbReference type="UniProtKB" id="Q99K99"/>
    </source>
</evidence>
<evidence type="ECO:0000256" key="2">
    <source>
        <dbReference type="SAM" id="MobiDB-lite"/>
    </source>
</evidence>
<evidence type="ECO:0000269" key="3">
    <source>
    </source>
</evidence>
<evidence type="ECO:0000269" key="4">
    <source>
    </source>
</evidence>
<evidence type="ECO:0000269" key="5">
    <source>
    </source>
</evidence>
<evidence type="ECO:0000303" key="6">
    <source>
    </source>
</evidence>
<evidence type="ECO:0000312" key="7">
    <source>
        <dbReference type="HGNC" id="HGNC:25618"/>
    </source>
</evidence>
<evidence type="ECO:0007744" key="8">
    <source>
    </source>
</evidence>
<protein>
    <recommendedName>
        <fullName evidence="6">PDCD10 and GCKIII kinases-associated protein 1</fullName>
    </recommendedName>
</protein>
<keyword id="KW-1003">Cell membrane</keyword>
<keyword id="KW-0472">Membrane</keyword>
<keyword id="KW-0597">Phosphoprotein</keyword>
<keyword id="KW-1267">Proteomics identification</keyword>
<keyword id="KW-1185">Reference proteome</keyword>
<keyword id="KW-0043">Tumor suppressor</keyword>
<comment type="function">
    <text evidence="4 5">Acts as a tumor suppressor (PubMed:36882524, PubMed:38517886). Acts as a tumor suppressor for colorectal cancer cell proliferation by targeting KEAP1/USP17/ELK1/CDK6 axis (PubMed:36882524).</text>
</comment>
<comment type="subunit">
    <text evidence="4 5">Interacts with KEAP1; this interaction prevents the ubiquitination of KEAP1 by TRIM25, thus protecting KEAP1 from degradation (PubMed:36882524). Found in association with PDCD10 and members of the STE20 kinases, such as STK24, STK25 and STK26 (PubMed:38517886).</text>
</comment>
<comment type="interaction">
    <interactant intactId="EBI-10216552">
        <id>Q8IY42</id>
    </interactant>
    <interactant intactId="EBI-9105722">
        <id>Q9NX38</id>
        <label>ABITRAM</label>
    </interactant>
    <organismsDiffer>false</organismsDiffer>
    <experiments>3</experiments>
</comment>
<comment type="interaction">
    <interactant intactId="EBI-10216552">
        <id>Q8IY42</id>
    </interactant>
    <interactant intactId="EBI-741885">
        <id>Q96LK0</id>
        <label>CEP19</label>
    </interactant>
    <organismsDiffer>false</organismsDiffer>
    <experiments>3</experiments>
</comment>
<comment type="interaction">
    <interactant intactId="EBI-10216552">
        <id>Q8IY42</id>
    </interactant>
    <interactant intactId="EBI-347740">
        <id>P60228</id>
        <label>EIF3E</label>
    </interactant>
    <organismsDiffer>false</organismsDiffer>
    <experiments>4</experiments>
</comment>
<comment type="interaction">
    <interactant intactId="EBI-10216552">
        <id>Q8IY42</id>
    </interactant>
    <interactant intactId="EBI-740195">
        <id>Q9BUL8</id>
        <label>PDCD10</label>
    </interactant>
    <organismsDiffer>false</organismsDiffer>
    <experiments>10</experiments>
</comment>
<comment type="subcellular location">
    <subcellularLocation>
        <location evidence="5">Cell membrane</location>
        <topology evidence="5">Peripheral membrane protein</topology>
    </subcellularLocation>
</comment>
<comment type="induction">
    <text evidence="4">Markedly down-regulated in colorectal cancer tissues.</text>
</comment>
<organism>
    <name type="scientific">Homo sapiens</name>
    <name type="common">Human</name>
    <dbReference type="NCBI Taxonomy" id="9606"/>
    <lineage>
        <taxon>Eukaryota</taxon>
        <taxon>Metazoa</taxon>
        <taxon>Chordata</taxon>
        <taxon>Craniata</taxon>
        <taxon>Vertebrata</taxon>
        <taxon>Euteleostomi</taxon>
        <taxon>Mammalia</taxon>
        <taxon>Eutheria</taxon>
        <taxon>Euarchontoglires</taxon>
        <taxon>Primates</taxon>
        <taxon>Haplorrhini</taxon>
        <taxon>Catarrhini</taxon>
        <taxon>Hominidae</taxon>
        <taxon>Homo</taxon>
    </lineage>
</organism>
<reference key="1">
    <citation type="journal article" date="2004" name="Nat. Genet.">
        <title>Complete sequencing and characterization of 21,243 full-length human cDNAs.</title>
        <authorList>
            <person name="Ota T."/>
            <person name="Suzuki Y."/>
            <person name="Nishikawa T."/>
            <person name="Otsuki T."/>
            <person name="Sugiyama T."/>
            <person name="Irie R."/>
            <person name="Wakamatsu A."/>
            <person name="Hayashi K."/>
            <person name="Sato H."/>
            <person name="Nagai K."/>
            <person name="Kimura K."/>
            <person name="Makita H."/>
            <person name="Sekine M."/>
            <person name="Obayashi M."/>
            <person name="Nishi T."/>
            <person name="Shibahara T."/>
            <person name="Tanaka T."/>
            <person name="Ishii S."/>
            <person name="Yamamoto J."/>
            <person name="Saito K."/>
            <person name="Kawai Y."/>
            <person name="Isono Y."/>
            <person name="Nakamura Y."/>
            <person name="Nagahari K."/>
            <person name="Murakami K."/>
            <person name="Yasuda T."/>
            <person name="Iwayanagi T."/>
            <person name="Wagatsuma M."/>
            <person name="Shiratori A."/>
            <person name="Sudo H."/>
            <person name="Hosoiri T."/>
            <person name="Kaku Y."/>
            <person name="Kodaira H."/>
            <person name="Kondo H."/>
            <person name="Sugawara M."/>
            <person name="Takahashi M."/>
            <person name="Kanda K."/>
            <person name="Yokoi T."/>
            <person name="Furuya T."/>
            <person name="Kikkawa E."/>
            <person name="Omura Y."/>
            <person name="Abe K."/>
            <person name="Kamihara K."/>
            <person name="Katsuta N."/>
            <person name="Sato K."/>
            <person name="Tanikawa M."/>
            <person name="Yamazaki M."/>
            <person name="Ninomiya K."/>
            <person name="Ishibashi T."/>
            <person name="Yamashita H."/>
            <person name="Murakawa K."/>
            <person name="Fujimori K."/>
            <person name="Tanai H."/>
            <person name="Kimata M."/>
            <person name="Watanabe M."/>
            <person name="Hiraoka S."/>
            <person name="Chiba Y."/>
            <person name="Ishida S."/>
            <person name="Ono Y."/>
            <person name="Takiguchi S."/>
            <person name="Watanabe S."/>
            <person name="Yosida M."/>
            <person name="Hotuta T."/>
            <person name="Kusano J."/>
            <person name="Kanehori K."/>
            <person name="Takahashi-Fujii A."/>
            <person name="Hara H."/>
            <person name="Tanase T.-O."/>
            <person name="Nomura Y."/>
            <person name="Togiya S."/>
            <person name="Komai F."/>
            <person name="Hara R."/>
            <person name="Takeuchi K."/>
            <person name="Arita M."/>
            <person name="Imose N."/>
            <person name="Musashino K."/>
            <person name="Yuuki H."/>
            <person name="Oshima A."/>
            <person name="Sasaki N."/>
            <person name="Aotsuka S."/>
            <person name="Yoshikawa Y."/>
            <person name="Matsunawa H."/>
            <person name="Ichihara T."/>
            <person name="Shiohata N."/>
            <person name="Sano S."/>
            <person name="Moriya S."/>
            <person name="Momiyama H."/>
            <person name="Satoh N."/>
            <person name="Takami S."/>
            <person name="Terashima Y."/>
            <person name="Suzuki O."/>
            <person name="Nakagawa S."/>
            <person name="Senoh A."/>
            <person name="Mizoguchi H."/>
            <person name="Goto Y."/>
            <person name="Shimizu F."/>
            <person name="Wakebe H."/>
            <person name="Hishigaki H."/>
            <person name="Watanabe T."/>
            <person name="Sugiyama A."/>
            <person name="Takemoto M."/>
            <person name="Kawakami B."/>
            <person name="Yamazaki M."/>
            <person name="Watanabe K."/>
            <person name="Kumagai A."/>
            <person name="Itakura S."/>
            <person name="Fukuzumi Y."/>
            <person name="Fujimori Y."/>
            <person name="Komiyama M."/>
            <person name="Tashiro H."/>
            <person name="Tanigami A."/>
            <person name="Fujiwara T."/>
            <person name="Ono T."/>
            <person name="Yamada K."/>
            <person name="Fujii Y."/>
            <person name="Ozaki K."/>
            <person name="Hirao M."/>
            <person name="Ohmori Y."/>
            <person name="Kawabata A."/>
            <person name="Hikiji T."/>
            <person name="Kobatake N."/>
            <person name="Inagaki H."/>
            <person name="Ikema Y."/>
            <person name="Okamoto S."/>
            <person name="Okitani R."/>
            <person name="Kawakami T."/>
            <person name="Noguchi S."/>
            <person name="Itoh T."/>
            <person name="Shigeta K."/>
            <person name="Senba T."/>
            <person name="Matsumura K."/>
            <person name="Nakajima Y."/>
            <person name="Mizuno T."/>
            <person name="Morinaga M."/>
            <person name="Sasaki M."/>
            <person name="Togashi T."/>
            <person name="Oyama M."/>
            <person name="Hata H."/>
            <person name="Watanabe M."/>
            <person name="Komatsu T."/>
            <person name="Mizushima-Sugano J."/>
            <person name="Satoh T."/>
            <person name="Shirai Y."/>
            <person name="Takahashi Y."/>
            <person name="Nakagawa K."/>
            <person name="Okumura K."/>
            <person name="Nagase T."/>
            <person name="Nomura N."/>
            <person name="Kikuchi H."/>
            <person name="Masuho Y."/>
            <person name="Yamashita R."/>
            <person name="Nakai K."/>
            <person name="Yada T."/>
            <person name="Nakamura Y."/>
            <person name="Ohara O."/>
            <person name="Isogai T."/>
            <person name="Sugano S."/>
        </authorList>
    </citation>
    <scope>NUCLEOTIDE SEQUENCE [LARGE SCALE MRNA]</scope>
    <scope>VARIANT GLY-274</scope>
    <source>
        <tissue>Placenta</tissue>
    </source>
</reference>
<reference key="2">
    <citation type="journal article" date="2005" name="Nature">
        <title>Generation and annotation of the DNA sequences of human chromosomes 2 and 4.</title>
        <authorList>
            <person name="Hillier L.W."/>
            <person name="Graves T.A."/>
            <person name="Fulton R.S."/>
            <person name="Fulton L.A."/>
            <person name="Pepin K.H."/>
            <person name="Minx P."/>
            <person name="Wagner-McPherson C."/>
            <person name="Layman D."/>
            <person name="Wylie K."/>
            <person name="Sekhon M."/>
            <person name="Becker M.C."/>
            <person name="Fewell G.A."/>
            <person name="Delehaunty K.D."/>
            <person name="Miner T.L."/>
            <person name="Nash W.E."/>
            <person name="Kremitzki C."/>
            <person name="Oddy L."/>
            <person name="Du H."/>
            <person name="Sun H."/>
            <person name="Bradshaw-Cordum H."/>
            <person name="Ali J."/>
            <person name="Carter J."/>
            <person name="Cordes M."/>
            <person name="Harris A."/>
            <person name="Isak A."/>
            <person name="van Brunt A."/>
            <person name="Nguyen C."/>
            <person name="Du F."/>
            <person name="Courtney L."/>
            <person name="Kalicki J."/>
            <person name="Ozersky P."/>
            <person name="Abbott S."/>
            <person name="Armstrong J."/>
            <person name="Belter E.A."/>
            <person name="Caruso L."/>
            <person name="Cedroni M."/>
            <person name="Cotton M."/>
            <person name="Davidson T."/>
            <person name="Desai A."/>
            <person name="Elliott G."/>
            <person name="Erb T."/>
            <person name="Fronick C."/>
            <person name="Gaige T."/>
            <person name="Haakenson W."/>
            <person name="Haglund K."/>
            <person name="Holmes A."/>
            <person name="Harkins R."/>
            <person name="Kim K."/>
            <person name="Kruchowski S.S."/>
            <person name="Strong C.M."/>
            <person name="Grewal N."/>
            <person name="Goyea E."/>
            <person name="Hou S."/>
            <person name="Levy A."/>
            <person name="Martinka S."/>
            <person name="Mead K."/>
            <person name="McLellan M.D."/>
            <person name="Meyer R."/>
            <person name="Randall-Maher J."/>
            <person name="Tomlinson C."/>
            <person name="Dauphin-Kohlberg S."/>
            <person name="Kozlowicz-Reilly A."/>
            <person name="Shah N."/>
            <person name="Swearengen-Shahid S."/>
            <person name="Snider J."/>
            <person name="Strong J.T."/>
            <person name="Thompson J."/>
            <person name="Yoakum M."/>
            <person name="Leonard S."/>
            <person name="Pearman C."/>
            <person name="Trani L."/>
            <person name="Radionenko M."/>
            <person name="Waligorski J.E."/>
            <person name="Wang C."/>
            <person name="Rock S.M."/>
            <person name="Tin-Wollam A.-M."/>
            <person name="Maupin R."/>
            <person name="Latreille P."/>
            <person name="Wendl M.C."/>
            <person name="Yang S.-P."/>
            <person name="Pohl C."/>
            <person name="Wallis J.W."/>
            <person name="Spieth J."/>
            <person name="Bieri T.A."/>
            <person name="Berkowicz N."/>
            <person name="Nelson J.O."/>
            <person name="Osborne J."/>
            <person name="Ding L."/>
            <person name="Meyer R."/>
            <person name="Sabo A."/>
            <person name="Shotland Y."/>
            <person name="Sinha P."/>
            <person name="Wohldmann P.E."/>
            <person name="Cook L.L."/>
            <person name="Hickenbotham M.T."/>
            <person name="Eldred J."/>
            <person name="Williams D."/>
            <person name="Jones T.A."/>
            <person name="She X."/>
            <person name="Ciccarelli F.D."/>
            <person name="Izaurralde E."/>
            <person name="Taylor J."/>
            <person name="Schmutz J."/>
            <person name="Myers R.M."/>
            <person name="Cox D.R."/>
            <person name="Huang X."/>
            <person name="McPherson J.D."/>
            <person name="Mardis E.R."/>
            <person name="Clifton S.W."/>
            <person name="Warren W.C."/>
            <person name="Chinwalla A.T."/>
            <person name="Eddy S.R."/>
            <person name="Marra M.A."/>
            <person name="Ovcharenko I."/>
            <person name="Furey T.S."/>
            <person name="Miller W."/>
            <person name="Eichler E.E."/>
            <person name="Bork P."/>
            <person name="Suyama M."/>
            <person name="Torrents D."/>
            <person name="Waterston R.H."/>
            <person name="Wilson R.K."/>
        </authorList>
    </citation>
    <scope>NUCLEOTIDE SEQUENCE [LARGE SCALE GENOMIC DNA]</scope>
</reference>
<reference key="3">
    <citation type="journal article" date="2004" name="Genome Res.">
        <title>The status, quality, and expansion of the NIH full-length cDNA project: the Mammalian Gene Collection (MGC).</title>
        <authorList>
            <consortium name="The MGC Project Team"/>
        </authorList>
    </citation>
    <scope>NUCLEOTIDE SEQUENCE [LARGE SCALE MRNA]</scope>
    <source>
        <tissue>Brain</tissue>
    </source>
</reference>
<reference key="4">
    <citation type="journal article" date="2014" name="J. Proteomics">
        <title>An enzyme assisted RP-RPLC approach for in-depth analysis of human liver phosphoproteome.</title>
        <authorList>
            <person name="Bian Y."/>
            <person name="Song C."/>
            <person name="Cheng K."/>
            <person name="Dong M."/>
            <person name="Wang F."/>
            <person name="Huang J."/>
            <person name="Sun D."/>
            <person name="Wang L."/>
            <person name="Ye M."/>
            <person name="Zou H."/>
        </authorList>
    </citation>
    <scope>PHOSPHORYLATION [LARGE SCALE ANALYSIS] AT SER-30 AND SER-238</scope>
    <scope>IDENTIFICATION BY MASS SPECTROMETRY [LARGE SCALE ANALYSIS]</scope>
    <source>
        <tissue>Liver</tissue>
    </source>
</reference>
<reference key="5">
    <citation type="journal article" date="2023" name="Oncogene">
        <title>C4orf19 inhibits colorectal cancer cell proliferation by competitively binding to Keap1 with TRIM25 via the USP17/Elk-1/CDK6 axis.</title>
        <authorList>
            <person name="Huang S."/>
            <person name="Li J."/>
            <person name="Wu S."/>
            <person name="Zheng Z."/>
            <person name="Wang C."/>
            <person name="Li H."/>
            <person name="Zhao L."/>
            <person name="Zhang X."/>
            <person name="Huang H."/>
            <person name="Huang C."/>
            <person name="Xie Q."/>
        </authorList>
    </citation>
    <scope>FUNCTION</scope>
    <scope>INDUCTION</scope>
    <scope>INTERACTION WITH KEAP1</scope>
</reference>
<reference key="6">
    <citation type="journal article" date="2024" name="Cell Rep.">
        <title>Evolution of chromosome-arm aberrations in breast cancer through genetic network rewiring.</title>
        <authorList>
            <person name="Kuzmin E."/>
            <person name="Baker T.M."/>
            <person name="Lesluyes T."/>
            <person name="Monlong J."/>
            <person name="Abe K.T."/>
            <person name="Coelho P.P."/>
            <person name="Schwartz M."/>
            <person name="Del Corpo J."/>
            <person name="Zou D."/>
            <person name="Morin G."/>
            <person name="Pacis A."/>
            <person name="Yang Y."/>
            <person name="Martinez C."/>
            <person name="Barber J."/>
            <person name="Kuasne H."/>
            <person name="Li R."/>
            <person name="Bourgey M."/>
            <person name="Fortier A.M."/>
            <person name="Davison P.G."/>
            <person name="Omeroglu A."/>
            <person name="Guiot M.C."/>
            <person name="Morris Q."/>
            <person name="Kleinman C.L."/>
            <person name="Huang S."/>
            <person name="Gingras A.C."/>
            <person name="Ragoussis J."/>
            <person name="Bourque G."/>
            <person name="Van Loo P."/>
            <person name="Park M."/>
        </authorList>
    </citation>
    <scope>FUNCTION</scope>
    <scope>SUBCELLULAR LOCATION</scope>
    <scope>SUBUNIT</scope>
</reference>
<feature type="chain" id="PRO_0000286561" description="PDCD10 and GCKIII kinases-associated protein 1">
    <location>
        <begin position="1"/>
        <end position="314"/>
    </location>
</feature>
<feature type="region of interest" description="Disordered" evidence="2">
    <location>
        <begin position="36"/>
        <end position="142"/>
    </location>
</feature>
<feature type="region of interest" description="Disordered" evidence="2">
    <location>
        <begin position="267"/>
        <end position="291"/>
    </location>
</feature>
<feature type="compositionally biased region" description="Polar residues" evidence="2">
    <location>
        <begin position="107"/>
        <end position="116"/>
    </location>
</feature>
<feature type="compositionally biased region" description="Basic and acidic residues" evidence="2">
    <location>
        <begin position="271"/>
        <end position="280"/>
    </location>
</feature>
<feature type="compositionally biased region" description="Acidic residues" evidence="2">
    <location>
        <begin position="281"/>
        <end position="291"/>
    </location>
</feature>
<feature type="modified residue" description="Phosphoserine" evidence="8">
    <location>
        <position position="30"/>
    </location>
</feature>
<feature type="modified residue" description="Phosphothreonine" evidence="1">
    <location>
        <position position="106"/>
    </location>
</feature>
<feature type="modified residue" description="Phosphoserine" evidence="8">
    <location>
        <position position="238"/>
    </location>
</feature>
<feature type="modified residue" description="Phosphoserine" evidence="1">
    <location>
        <position position="241"/>
    </location>
</feature>
<feature type="sequence variant" id="VAR_050770" description="In dbSNP:rs6852908.">
    <original>D</original>
    <variation>E</variation>
    <location>
        <position position="39"/>
    </location>
</feature>
<feature type="sequence variant" id="VAR_032118" description="In dbSNP:rs2973275.">
    <original>A</original>
    <variation>T</variation>
    <location>
        <position position="151"/>
    </location>
</feature>
<feature type="sequence variant" id="VAR_032119" description="In dbSNP:rs3733500." evidence="3">
    <original>E</original>
    <variation>G</variation>
    <location>
        <position position="274"/>
    </location>
</feature>
<name>PGKA1_HUMAN</name>
<proteinExistence type="evidence at protein level"/>
<dbReference type="EMBL" id="AK001879">
    <property type="protein sequence ID" value="BAA91958.1"/>
    <property type="molecule type" value="mRNA"/>
</dbReference>
<dbReference type="EMBL" id="AC027607">
    <property type="status" value="NOT_ANNOTATED_CDS"/>
    <property type="molecule type" value="Genomic_DNA"/>
</dbReference>
<dbReference type="EMBL" id="BC037906">
    <property type="protein sequence ID" value="AAH37906.1"/>
    <property type="molecule type" value="mRNA"/>
</dbReference>
<dbReference type="CCDS" id="CCDS3442.1"/>
<dbReference type="RefSeq" id="NP_001098099.1">
    <property type="nucleotide sequence ID" value="NM_001104629.2"/>
</dbReference>
<dbReference type="RefSeq" id="NP_060772.2">
    <property type="nucleotide sequence ID" value="NM_018302.3"/>
</dbReference>
<dbReference type="RefSeq" id="XP_011512014.1">
    <property type="nucleotide sequence ID" value="XM_011513712.2"/>
</dbReference>
<dbReference type="RefSeq" id="XP_011512015.1">
    <property type="nucleotide sequence ID" value="XM_011513713.2"/>
</dbReference>
<dbReference type="RefSeq" id="XP_016863850.1">
    <property type="nucleotide sequence ID" value="XM_017008361.1"/>
</dbReference>
<dbReference type="BioGRID" id="120574">
    <property type="interactions" value="10"/>
</dbReference>
<dbReference type="FunCoup" id="Q8IY42">
    <property type="interactions" value="26"/>
</dbReference>
<dbReference type="IntAct" id="Q8IY42">
    <property type="interactions" value="9"/>
</dbReference>
<dbReference type="MINT" id="Q8IY42"/>
<dbReference type="STRING" id="9606.ENSP00000371408"/>
<dbReference type="GlyGen" id="Q8IY42">
    <property type="glycosylation" value="1 site, 1 O-linked glycan (1 site)"/>
</dbReference>
<dbReference type="iPTMnet" id="Q8IY42"/>
<dbReference type="PhosphoSitePlus" id="Q8IY42"/>
<dbReference type="BioMuta" id="C4orf19"/>
<dbReference type="DMDM" id="74728286"/>
<dbReference type="jPOST" id="Q8IY42"/>
<dbReference type="MassIVE" id="Q8IY42"/>
<dbReference type="PaxDb" id="9606-ENSP00000284437"/>
<dbReference type="PeptideAtlas" id="Q8IY42"/>
<dbReference type="ProteomicsDB" id="71104"/>
<dbReference type="Antibodypedia" id="43802">
    <property type="antibodies" value="71 antibodies from 15 providers"/>
</dbReference>
<dbReference type="DNASU" id="55286"/>
<dbReference type="Ensembl" id="ENST00000284437.6">
    <property type="protein sequence ID" value="ENSP00000284437.6"/>
    <property type="gene ID" value="ENSG00000154274.15"/>
</dbReference>
<dbReference type="Ensembl" id="ENST00000381980.9">
    <property type="protein sequence ID" value="ENSP00000371408.4"/>
    <property type="gene ID" value="ENSG00000154274.15"/>
</dbReference>
<dbReference type="GeneID" id="55286"/>
<dbReference type="KEGG" id="hsa:55286"/>
<dbReference type="MANE-Select" id="ENST00000381980.9">
    <property type="protein sequence ID" value="ENSP00000371408.4"/>
    <property type="RefSeq nucleotide sequence ID" value="NM_001104629.2"/>
    <property type="RefSeq protein sequence ID" value="NP_001098099.1"/>
</dbReference>
<dbReference type="UCSC" id="uc003gsw.5">
    <property type="organism name" value="human"/>
</dbReference>
<dbReference type="AGR" id="HGNC:25618"/>
<dbReference type="CTD" id="55286"/>
<dbReference type="DisGeNET" id="55286"/>
<dbReference type="GeneCards" id="C4orf19"/>
<dbReference type="HGNC" id="HGNC:25618">
    <property type="gene designation" value="PGCKA1"/>
</dbReference>
<dbReference type="HPA" id="ENSG00000154274">
    <property type="expression patterns" value="Tissue enhanced (liver)"/>
</dbReference>
<dbReference type="neXtProt" id="NX_Q8IY42"/>
<dbReference type="OpenTargets" id="ENSG00000154274"/>
<dbReference type="PharmGKB" id="PA144596500"/>
<dbReference type="VEuPathDB" id="HostDB:ENSG00000154274"/>
<dbReference type="eggNOG" id="ENOG502S5D9">
    <property type="taxonomic scope" value="Eukaryota"/>
</dbReference>
<dbReference type="GeneTree" id="ENSGT00390000013778"/>
<dbReference type="HOGENOM" id="CLU_076375_0_0_1"/>
<dbReference type="InParanoid" id="Q8IY42"/>
<dbReference type="OMA" id="YPQLWGS"/>
<dbReference type="OrthoDB" id="8773301at2759"/>
<dbReference type="PAN-GO" id="Q8IY42">
    <property type="GO annotations" value="0 GO annotations based on evolutionary models"/>
</dbReference>
<dbReference type="PhylomeDB" id="Q8IY42"/>
<dbReference type="TreeFam" id="TF337421"/>
<dbReference type="PathwayCommons" id="Q8IY42"/>
<dbReference type="SignaLink" id="Q8IY42"/>
<dbReference type="BioGRID-ORCS" id="55286">
    <property type="hits" value="15 hits in 1117 CRISPR screens"/>
</dbReference>
<dbReference type="ChiTaRS" id="C4orf19">
    <property type="organism name" value="human"/>
</dbReference>
<dbReference type="GenomeRNAi" id="55286"/>
<dbReference type="Pharos" id="Q8IY42">
    <property type="development level" value="Tdark"/>
</dbReference>
<dbReference type="PRO" id="PR:Q8IY42"/>
<dbReference type="Proteomes" id="UP000005640">
    <property type="component" value="Chromosome 4"/>
</dbReference>
<dbReference type="RNAct" id="Q8IY42">
    <property type="molecule type" value="protein"/>
</dbReference>
<dbReference type="Bgee" id="ENSG00000154274">
    <property type="expression patterns" value="Expressed in amniotic fluid and 161 other cell types or tissues"/>
</dbReference>
<dbReference type="ExpressionAtlas" id="Q8IY42">
    <property type="expression patterns" value="baseline and differential"/>
</dbReference>
<dbReference type="GO" id="GO:0071944">
    <property type="term" value="C:cell periphery"/>
    <property type="evidence" value="ECO:0000314"/>
    <property type="project" value="UniProtKB"/>
</dbReference>
<dbReference type="GO" id="GO:0005886">
    <property type="term" value="C:plasma membrane"/>
    <property type="evidence" value="ECO:0007669"/>
    <property type="project" value="UniProtKB-SubCell"/>
</dbReference>
<dbReference type="GO" id="GO:0051726">
    <property type="term" value="P:regulation of cell cycle"/>
    <property type="evidence" value="ECO:0000315"/>
    <property type="project" value="UniProtKB"/>
</dbReference>
<dbReference type="InterPro" id="IPR031528">
    <property type="entry name" value="DUF4699"/>
</dbReference>
<dbReference type="PANTHER" id="PTHR16106">
    <property type="entry name" value="CHROMOSOME 4 OPEN READING FRAME 19"/>
    <property type="match status" value="1"/>
</dbReference>
<dbReference type="PANTHER" id="PTHR16106:SF3">
    <property type="entry name" value="CHROMOSOME 4 OPEN READING FRAME 19"/>
    <property type="match status" value="1"/>
</dbReference>
<dbReference type="Pfam" id="PF15770">
    <property type="entry name" value="DUF4699"/>
    <property type="match status" value="1"/>
</dbReference>
<gene>
    <name evidence="7" type="primary">PGCKA1</name>
    <name type="synonym">C4orf19</name>
</gene>